<dbReference type="EC" id="3.1.11.6" evidence="1"/>
<dbReference type="EMBL" id="CP001063">
    <property type="protein sequence ID" value="ACD08670.1"/>
    <property type="molecule type" value="Genomic_DNA"/>
</dbReference>
<dbReference type="RefSeq" id="WP_001124935.1">
    <property type="nucleotide sequence ID" value="NC_010658.1"/>
</dbReference>
<dbReference type="SMR" id="B2U4M5"/>
<dbReference type="STRING" id="344609.SbBS512_E0343"/>
<dbReference type="GeneID" id="75202844"/>
<dbReference type="KEGG" id="sbc:SbBS512_E0343"/>
<dbReference type="HOGENOM" id="CLU_145918_3_3_6"/>
<dbReference type="Proteomes" id="UP000001030">
    <property type="component" value="Chromosome"/>
</dbReference>
<dbReference type="GO" id="GO:0005829">
    <property type="term" value="C:cytosol"/>
    <property type="evidence" value="ECO:0007669"/>
    <property type="project" value="TreeGrafter"/>
</dbReference>
<dbReference type="GO" id="GO:0009318">
    <property type="term" value="C:exodeoxyribonuclease VII complex"/>
    <property type="evidence" value="ECO:0007669"/>
    <property type="project" value="InterPro"/>
</dbReference>
<dbReference type="GO" id="GO:0008855">
    <property type="term" value="F:exodeoxyribonuclease VII activity"/>
    <property type="evidence" value="ECO:0007669"/>
    <property type="project" value="UniProtKB-UniRule"/>
</dbReference>
<dbReference type="GO" id="GO:0006308">
    <property type="term" value="P:DNA catabolic process"/>
    <property type="evidence" value="ECO:0007669"/>
    <property type="project" value="UniProtKB-UniRule"/>
</dbReference>
<dbReference type="FunFam" id="1.10.287.1040:FF:000001">
    <property type="entry name" value="Exodeoxyribonuclease 7 small subunit"/>
    <property type="match status" value="1"/>
</dbReference>
<dbReference type="Gene3D" id="1.10.287.1040">
    <property type="entry name" value="Exonuclease VII, small subunit"/>
    <property type="match status" value="1"/>
</dbReference>
<dbReference type="HAMAP" id="MF_00337">
    <property type="entry name" value="Exonuc_7_S"/>
    <property type="match status" value="1"/>
</dbReference>
<dbReference type="InterPro" id="IPR003761">
    <property type="entry name" value="Exonuc_VII_S"/>
</dbReference>
<dbReference type="InterPro" id="IPR037004">
    <property type="entry name" value="Exonuc_VII_ssu_sf"/>
</dbReference>
<dbReference type="NCBIfam" id="NF002137">
    <property type="entry name" value="PRK00977.1-1"/>
    <property type="match status" value="1"/>
</dbReference>
<dbReference type="NCBIfam" id="NF002140">
    <property type="entry name" value="PRK00977.1-4"/>
    <property type="match status" value="1"/>
</dbReference>
<dbReference type="NCBIfam" id="TIGR01280">
    <property type="entry name" value="xseB"/>
    <property type="match status" value="1"/>
</dbReference>
<dbReference type="PANTHER" id="PTHR34137">
    <property type="entry name" value="EXODEOXYRIBONUCLEASE 7 SMALL SUBUNIT"/>
    <property type="match status" value="1"/>
</dbReference>
<dbReference type="PANTHER" id="PTHR34137:SF1">
    <property type="entry name" value="EXODEOXYRIBONUCLEASE 7 SMALL SUBUNIT"/>
    <property type="match status" value="1"/>
</dbReference>
<dbReference type="Pfam" id="PF02609">
    <property type="entry name" value="Exonuc_VII_S"/>
    <property type="match status" value="1"/>
</dbReference>
<dbReference type="PIRSF" id="PIRSF006488">
    <property type="entry name" value="Exonuc_VII_S"/>
    <property type="match status" value="1"/>
</dbReference>
<dbReference type="SUPFAM" id="SSF116842">
    <property type="entry name" value="XseB-like"/>
    <property type="match status" value="1"/>
</dbReference>
<reference key="1">
    <citation type="submission" date="2008-05" db="EMBL/GenBank/DDBJ databases">
        <title>Complete sequence of Shigella boydii serotype 18 strain BS512.</title>
        <authorList>
            <person name="Rasko D.A."/>
            <person name="Rosovitz M."/>
            <person name="Maurelli A.T."/>
            <person name="Myers G."/>
            <person name="Seshadri R."/>
            <person name="Cer R."/>
            <person name="Jiang L."/>
            <person name="Ravel J."/>
            <person name="Sebastian Y."/>
        </authorList>
    </citation>
    <scope>NUCLEOTIDE SEQUENCE [LARGE SCALE GENOMIC DNA]</scope>
    <source>
        <strain>CDC 3083-94 / BS512</strain>
    </source>
</reference>
<accession>B2U4M5</accession>
<organism>
    <name type="scientific">Shigella boydii serotype 18 (strain CDC 3083-94 / BS512)</name>
    <dbReference type="NCBI Taxonomy" id="344609"/>
    <lineage>
        <taxon>Bacteria</taxon>
        <taxon>Pseudomonadati</taxon>
        <taxon>Pseudomonadota</taxon>
        <taxon>Gammaproteobacteria</taxon>
        <taxon>Enterobacterales</taxon>
        <taxon>Enterobacteriaceae</taxon>
        <taxon>Shigella</taxon>
    </lineage>
</organism>
<name>EX7S_SHIB3</name>
<gene>
    <name evidence="1" type="primary">xseB</name>
    <name type="ordered locus">SbBS512_E0343</name>
</gene>
<comment type="function">
    <text evidence="1">Bidirectionally degrades single-stranded DNA into large acid-insoluble oligonucleotides, which are then degraded further into small acid-soluble oligonucleotides.</text>
</comment>
<comment type="catalytic activity">
    <reaction evidence="1">
        <text>Exonucleolytic cleavage in either 5'- to 3'- or 3'- to 5'-direction to yield nucleoside 5'-phosphates.</text>
        <dbReference type="EC" id="3.1.11.6"/>
    </reaction>
</comment>
<comment type="subunit">
    <text evidence="1">Heterooligomer composed of large and small subunits.</text>
</comment>
<comment type="subcellular location">
    <subcellularLocation>
        <location evidence="1">Cytoplasm</location>
    </subcellularLocation>
</comment>
<comment type="similarity">
    <text evidence="1">Belongs to the XseB family.</text>
</comment>
<keyword id="KW-0963">Cytoplasm</keyword>
<keyword id="KW-0269">Exonuclease</keyword>
<keyword id="KW-0378">Hydrolase</keyword>
<keyword id="KW-0540">Nuclease</keyword>
<keyword id="KW-1185">Reference proteome</keyword>
<proteinExistence type="inferred from homology"/>
<evidence type="ECO:0000255" key="1">
    <source>
        <dbReference type="HAMAP-Rule" id="MF_00337"/>
    </source>
</evidence>
<feature type="chain" id="PRO_1000119957" description="Exodeoxyribonuclease 7 small subunit">
    <location>
        <begin position="1"/>
        <end position="80"/>
    </location>
</feature>
<sequence length="80" mass="8952">MPKKNEAPASFEKALSELEQIVTRLESGDLPLEEALNEFERGVQLARQGQAKLQQAEQRVQILLSDNEDASLTPFTPDNE</sequence>
<protein>
    <recommendedName>
        <fullName evidence="1">Exodeoxyribonuclease 7 small subunit</fullName>
        <ecNumber evidence="1">3.1.11.6</ecNumber>
    </recommendedName>
    <alternativeName>
        <fullName evidence="1">Exodeoxyribonuclease VII small subunit</fullName>
        <shortName evidence="1">Exonuclease VII small subunit</shortName>
    </alternativeName>
</protein>